<comment type="function">
    <text evidence="1">Converts 2C-methyl-D-erythritol 2,4-cyclodiphosphate (ME-2,4cPP) into 1-hydroxy-2-methyl-2-(E)-butenyl 4-diphosphate.</text>
</comment>
<comment type="catalytic activity">
    <reaction evidence="1">
        <text>(2E)-4-hydroxy-3-methylbut-2-enyl diphosphate + 2 oxidized [2Fe-2S]-[ferredoxin] + H2O = 2-C-methyl-D-erythritol 2,4-cyclic diphosphate + 2 reduced [2Fe-2S]-[ferredoxin] + H(+)</text>
        <dbReference type="Rhea" id="RHEA:26119"/>
        <dbReference type="Rhea" id="RHEA-COMP:10000"/>
        <dbReference type="Rhea" id="RHEA-COMP:10001"/>
        <dbReference type="ChEBI" id="CHEBI:15377"/>
        <dbReference type="ChEBI" id="CHEBI:15378"/>
        <dbReference type="ChEBI" id="CHEBI:33737"/>
        <dbReference type="ChEBI" id="CHEBI:33738"/>
        <dbReference type="ChEBI" id="CHEBI:58483"/>
        <dbReference type="ChEBI" id="CHEBI:128753"/>
        <dbReference type="EC" id="1.17.7.1"/>
    </reaction>
</comment>
<comment type="cofactor">
    <cofactor evidence="1">
        <name>[4Fe-4S] cluster</name>
        <dbReference type="ChEBI" id="CHEBI:49883"/>
    </cofactor>
    <text evidence="1">Binds 1 [4Fe-4S] cluster.</text>
</comment>
<comment type="pathway">
    <text evidence="1">Isoprenoid biosynthesis; isopentenyl diphosphate biosynthesis via DXP pathway; isopentenyl diphosphate from 1-deoxy-D-xylulose 5-phosphate: step 5/6.</text>
</comment>
<comment type="similarity">
    <text evidence="1">Belongs to the IspG family.</text>
</comment>
<accession>Q3AK30</accession>
<organism>
    <name type="scientific">Synechococcus sp. (strain CC9605)</name>
    <dbReference type="NCBI Taxonomy" id="110662"/>
    <lineage>
        <taxon>Bacteria</taxon>
        <taxon>Bacillati</taxon>
        <taxon>Cyanobacteriota</taxon>
        <taxon>Cyanophyceae</taxon>
        <taxon>Synechococcales</taxon>
        <taxon>Synechococcaceae</taxon>
        <taxon>Synechococcus</taxon>
    </lineage>
</organism>
<evidence type="ECO:0000255" key="1">
    <source>
        <dbReference type="HAMAP-Rule" id="MF_00159"/>
    </source>
</evidence>
<protein>
    <recommendedName>
        <fullName evidence="1">4-hydroxy-3-methylbut-2-en-1-yl diphosphate synthase (ferredoxin)</fullName>
        <ecNumber evidence="1">1.17.7.1</ecNumber>
    </recommendedName>
    <alternativeName>
        <fullName evidence="1">1-hydroxy-2-methyl-2-(E)-butenyl 4-diphosphate synthase</fullName>
    </alternativeName>
</protein>
<keyword id="KW-0004">4Fe-4S</keyword>
<keyword id="KW-0408">Iron</keyword>
<keyword id="KW-0411">Iron-sulfur</keyword>
<keyword id="KW-0414">Isoprene biosynthesis</keyword>
<keyword id="KW-0479">Metal-binding</keyword>
<keyword id="KW-0560">Oxidoreductase</keyword>
<reference key="1">
    <citation type="submission" date="2005-07" db="EMBL/GenBank/DDBJ databases">
        <title>Complete sequence of Synechococcus sp. CC9605.</title>
        <authorList>
            <consortium name="US DOE Joint Genome Institute"/>
            <person name="Copeland A."/>
            <person name="Lucas S."/>
            <person name="Lapidus A."/>
            <person name="Barry K."/>
            <person name="Detter J.C."/>
            <person name="Glavina T."/>
            <person name="Hammon N."/>
            <person name="Israni S."/>
            <person name="Pitluck S."/>
            <person name="Schmutz J."/>
            <person name="Martinez M."/>
            <person name="Larimer F."/>
            <person name="Land M."/>
            <person name="Kyrpides N."/>
            <person name="Ivanova N."/>
            <person name="Richardson P."/>
        </authorList>
    </citation>
    <scope>NUCLEOTIDE SEQUENCE [LARGE SCALE GENOMIC DNA]</scope>
    <source>
        <strain>CC9605</strain>
    </source>
</reference>
<feature type="chain" id="PRO_1000011537" description="4-hydroxy-3-methylbut-2-en-1-yl diphosphate synthase (ferredoxin)">
    <location>
        <begin position="1"/>
        <end position="398"/>
    </location>
</feature>
<feature type="binding site" evidence="1">
    <location>
        <position position="306"/>
    </location>
    <ligand>
        <name>[4Fe-4S] cluster</name>
        <dbReference type="ChEBI" id="CHEBI:49883"/>
    </ligand>
</feature>
<feature type="binding site" evidence="1">
    <location>
        <position position="309"/>
    </location>
    <ligand>
        <name>[4Fe-4S] cluster</name>
        <dbReference type="ChEBI" id="CHEBI:49883"/>
    </ligand>
</feature>
<feature type="binding site" evidence="1">
    <location>
        <position position="340"/>
    </location>
    <ligand>
        <name>[4Fe-4S] cluster</name>
        <dbReference type="ChEBI" id="CHEBI:49883"/>
    </ligand>
</feature>
<feature type="binding site" evidence="1">
    <location>
        <position position="347"/>
    </location>
    <ligand>
        <name>[4Fe-4S] cluster</name>
        <dbReference type="ChEBI" id="CHEBI:49883"/>
    </ligand>
</feature>
<dbReference type="EC" id="1.17.7.1" evidence="1"/>
<dbReference type="EMBL" id="CP000110">
    <property type="protein sequence ID" value="ABB35052.1"/>
    <property type="molecule type" value="Genomic_DNA"/>
</dbReference>
<dbReference type="RefSeq" id="WP_011364271.1">
    <property type="nucleotide sequence ID" value="NC_007516.1"/>
</dbReference>
<dbReference type="SMR" id="Q3AK30"/>
<dbReference type="STRING" id="110662.Syncc9605_1298"/>
<dbReference type="KEGG" id="syd:Syncc9605_1298"/>
<dbReference type="eggNOG" id="COG0821">
    <property type="taxonomic scope" value="Bacteria"/>
</dbReference>
<dbReference type="HOGENOM" id="CLU_042258_0_0_3"/>
<dbReference type="OrthoDB" id="9803214at2"/>
<dbReference type="UniPathway" id="UPA00056">
    <property type="reaction ID" value="UER00096"/>
</dbReference>
<dbReference type="GO" id="GO:0051539">
    <property type="term" value="F:4 iron, 4 sulfur cluster binding"/>
    <property type="evidence" value="ECO:0007669"/>
    <property type="project" value="UniProtKB-UniRule"/>
</dbReference>
<dbReference type="GO" id="GO:0046429">
    <property type="term" value="F:4-hydroxy-3-methylbut-2-en-1-yl diphosphate synthase activity (ferredoxin)"/>
    <property type="evidence" value="ECO:0007669"/>
    <property type="project" value="UniProtKB-UniRule"/>
</dbReference>
<dbReference type="GO" id="GO:0005506">
    <property type="term" value="F:iron ion binding"/>
    <property type="evidence" value="ECO:0007669"/>
    <property type="project" value="InterPro"/>
</dbReference>
<dbReference type="GO" id="GO:0019288">
    <property type="term" value="P:isopentenyl diphosphate biosynthetic process, methylerythritol 4-phosphate pathway"/>
    <property type="evidence" value="ECO:0007669"/>
    <property type="project" value="UniProtKB-UniRule"/>
</dbReference>
<dbReference type="GO" id="GO:0016114">
    <property type="term" value="P:terpenoid biosynthetic process"/>
    <property type="evidence" value="ECO:0007669"/>
    <property type="project" value="InterPro"/>
</dbReference>
<dbReference type="FunFam" id="3.20.20.20:FF:000005">
    <property type="entry name" value="4-hydroxy-3-methylbut-2-en-1-yl diphosphate synthase (flavodoxin)"/>
    <property type="match status" value="1"/>
</dbReference>
<dbReference type="FunFam" id="3.30.413.10:FF:000006">
    <property type="entry name" value="4-hydroxy-3-methylbut-2-en-1-yl diphosphate synthase (flavodoxin)"/>
    <property type="match status" value="1"/>
</dbReference>
<dbReference type="Gene3D" id="3.20.20.20">
    <property type="entry name" value="Dihydropteroate synthase-like"/>
    <property type="match status" value="1"/>
</dbReference>
<dbReference type="Gene3D" id="3.30.413.10">
    <property type="entry name" value="Sulfite Reductase Hemoprotein, domain 1"/>
    <property type="match status" value="1"/>
</dbReference>
<dbReference type="HAMAP" id="MF_00159">
    <property type="entry name" value="IspG"/>
    <property type="match status" value="1"/>
</dbReference>
<dbReference type="InterPro" id="IPR011005">
    <property type="entry name" value="Dihydropteroate_synth-like_sf"/>
</dbReference>
<dbReference type="InterPro" id="IPR016425">
    <property type="entry name" value="IspG_bac"/>
</dbReference>
<dbReference type="InterPro" id="IPR004588">
    <property type="entry name" value="IspG_bac-typ"/>
</dbReference>
<dbReference type="InterPro" id="IPR045854">
    <property type="entry name" value="NO2/SO3_Rdtase_4Fe4S_sf"/>
</dbReference>
<dbReference type="NCBIfam" id="TIGR00612">
    <property type="entry name" value="ispG_gcpE"/>
    <property type="match status" value="1"/>
</dbReference>
<dbReference type="NCBIfam" id="NF001540">
    <property type="entry name" value="PRK00366.1"/>
    <property type="match status" value="1"/>
</dbReference>
<dbReference type="PANTHER" id="PTHR30454">
    <property type="entry name" value="4-HYDROXY-3-METHYLBUT-2-EN-1-YL DIPHOSPHATE SYNTHASE"/>
    <property type="match status" value="1"/>
</dbReference>
<dbReference type="PANTHER" id="PTHR30454:SF0">
    <property type="entry name" value="4-HYDROXY-3-METHYLBUT-2-EN-1-YL DIPHOSPHATE SYNTHASE (FERREDOXIN), CHLOROPLASTIC"/>
    <property type="match status" value="1"/>
</dbReference>
<dbReference type="Pfam" id="PF04551">
    <property type="entry name" value="GcpE"/>
    <property type="match status" value="1"/>
</dbReference>
<dbReference type="PIRSF" id="PIRSF004640">
    <property type="entry name" value="IspG"/>
    <property type="match status" value="1"/>
</dbReference>
<dbReference type="SUPFAM" id="SSF56014">
    <property type="entry name" value="Nitrite and sulphite reductase 4Fe-4S domain-like"/>
    <property type="match status" value="1"/>
</dbReference>
<name>ISPG_SYNSC</name>
<proteinExistence type="inferred from homology"/>
<gene>
    <name evidence="1" type="primary">ispG</name>
    <name type="ordered locus">Syncc9605_1298</name>
</gene>
<sequence>MTALARRYDTQIHRRVTRTVMVGDVPVGSEHPIVVQSMINEDTLDIEAAVAGIIRLAEAGSEIVRVTTPSMAHAKAMGQIRKELRQRGCSVPLVADVHHNGVKIALEVAQHVDKVRINPGLFIFDKPDPNRQEFSPEEFAAIGQRIRETFEPLVTLLRDQNKALRIGVNHGSLAERMLFTYGDTPEGMVESAMEFVRICHELDFHNILISMKASRAPVMLAAYRLMADTMDKEGFNYPLHLGVTEAGDGDYGRIKSTAGIATLLADGLGDTLRVSLTEAPEKEIPVCYSILQSLGLRKTMVEYVACPSCGRTLFNLEEVLHKVRNATSHLTGLDIAVMGCIVNGPGEMADADYGYVGKTPGVISLYRGRDEIRKVPEAEGVEALIQLIKEDGRWVEPA</sequence>